<organism>
    <name type="scientific">Nostoc sp. (strain PCC 7120 / SAG 25.82 / UTEX 2576)</name>
    <dbReference type="NCBI Taxonomy" id="103690"/>
    <lineage>
        <taxon>Bacteria</taxon>
        <taxon>Bacillati</taxon>
        <taxon>Cyanobacteriota</taxon>
        <taxon>Cyanophyceae</taxon>
        <taxon>Nostocales</taxon>
        <taxon>Nostocaceae</taxon>
        <taxon>Nostoc</taxon>
    </lineage>
</organism>
<sequence length="96" mass="10900">MIDREQVRKVALLARLELTPEEEEQFTTQLGSILDYVEQLNELDVSNVPPTARAIDVSNITREDNLQPYADREAILSSAPEQEGEFFKVPKILNAE</sequence>
<feature type="chain" id="PRO_0000105270" description="Glutamyl-tRNA(Gln) amidotransferase subunit C">
    <location>
        <begin position="1"/>
        <end position="96"/>
    </location>
</feature>
<accession>P58527</accession>
<protein>
    <recommendedName>
        <fullName>Glutamyl-tRNA(Gln) amidotransferase subunit C</fullName>
        <shortName>Glu-ADT subunit C</shortName>
        <ecNumber evidence="1">6.3.5.-</ecNumber>
    </recommendedName>
</protein>
<evidence type="ECO:0000255" key="1">
    <source>
        <dbReference type="HAMAP-Rule" id="MF_00122"/>
    </source>
</evidence>
<dbReference type="EC" id="6.3.5.-" evidence="1"/>
<dbReference type="EMBL" id="BA000019">
    <property type="protein sequence ID" value="BAB74891.1"/>
    <property type="molecule type" value="Genomic_DNA"/>
</dbReference>
<dbReference type="PIR" id="AI2204">
    <property type="entry name" value="AI2204"/>
</dbReference>
<dbReference type="RefSeq" id="WP_010997343.1">
    <property type="nucleotide sequence ID" value="NZ_RSCN01000001.1"/>
</dbReference>
<dbReference type="SMR" id="P58527"/>
<dbReference type="STRING" id="103690.gene:10495229"/>
<dbReference type="KEGG" id="ana:asl3192"/>
<dbReference type="eggNOG" id="COG0721">
    <property type="taxonomic scope" value="Bacteria"/>
</dbReference>
<dbReference type="OrthoDB" id="9813938at2"/>
<dbReference type="Proteomes" id="UP000002483">
    <property type="component" value="Chromosome"/>
</dbReference>
<dbReference type="GO" id="GO:0050566">
    <property type="term" value="F:asparaginyl-tRNA synthase (glutamine-hydrolyzing) activity"/>
    <property type="evidence" value="ECO:0007669"/>
    <property type="project" value="RHEA"/>
</dbReference>
<dbReference type="GO" id="GO:0005524">
    <property type="term" value="F:ATP binding"/>
    <property type="evidence" value="ECO:0007669"/>
    <property type="project" value="UniProtKB-KW"/>
</dbReference>
<dbReference type="GO" id="GO:0050567">
    <property type="term" value="F:glutaminyl-tRNA synthase (glutamine-hydrolyzing) activity"/>
    <property type="evidence" value="ECO:0007669"/>
    <property type="project" value="UniProtKB-UniRule"/>
</dbReference>
<dbReference type="GO" id="GO:0070681">
    <property type="term" value="P:glutaminyl-tRNAGln biosynthesis via transamidation"/>
    <property type="evidence" value="ECO:0007669"/>
    <property type="project" value="TreeGrafter"/>
</dbReference>
<dbReference type="GO" id="GO:0006450">
    <property type="term" value="P:regulation of translational fidelity"/>
    <property type="evidence" value="ECO:0007669"/>
    <property type="project" value="InterPro"/>
</dbReference>
<dbReference type="GO" id="GO:0006412">
    <property type="term" value="P:translation"/>
    <property type="evidence" value="ECO:0007669"/>
    <property type="project" value="UniProtKB-UniRule"/>
</dbReference>
<dbReference type="Gene3D" id="1.10.20.60">
    <property type="entry name" value="Glu-tRNAGln amidotransferase C subunit, N-terminal domain"/>
    <property type="match status" value="1"/>
</dbReference>
<dbReference type="HAMAP" id="MF_00122">
    <property type="entry name" value="GatC"/>
    <property type="match status" value="1"/>
</dbReference>
<dbReference type="InterPro" id="IPR036113">
    <property type="entry name" value="Asp/Glu-ADT_sf_sub_c"/>
</dbReference>
<dbReference type="InterPro" id="IPR003837">
    <property type="entry name" value="GatC"/>
</dbReference>
<dbReference type="NCBIfam" id="TIGR00135">
    <property type="entry name" value="gatC"/>
    <property type="match status" value="1"/>
</dbReference>
<dbReference type="PANTHER" id="PTHR15004">
    <property type="entry name" value="GLUTAMYL-TRNA(GLN) AMIDOTRANSFERASE SUBUNIT C, MITOCHONDRIAL"/>
    <property type="match status" value="1"/>
</dbReference>
<dbReference type="PANTHER" id="PTHR15004:SF0">
    <property type="entry name" value="GLUTAMYL-TRNA(GLN) AMIDOTRANSFERASE SUBUNIT C, MITOCHONDRIAL"/>
    <property type="match status" value="1"/>
</dbReference>
<dbReference type="Pfam" id="PF02686">
    <property type="entry name" value="GatC"/>
    <property type="match status" value="1"/>
</dbReference>
<dbReference type="SUPFAM" id="SSF141000">
    <property type="entry name" value="Glu-tRNAGln amidotransferase C subunit"/>
    <property type="match status" value="1"/>
</dbReference>
<gene>
    <name evidence="1" type="primary">gatC</name>
    <name type="ordered locus">asl3192</name>
</gene>
<comment type="function">
    <text evidence="1">Allows the formation of correctly charged Asn-tRNA(Asn) or Gln-tRNA(Gln) through the transamidation of misacylated Asp-tRNA(Asn) or Glu-tRNA(Gln) in organisms which lack either or both of asparaginyl-tRNA or glutaminyl-tRNA synthetases. The reaction takes place in the presence of glutamine and ATP through an activated phospho-Asp-tRNA(Asn) or phospho-Glu-tRNA(Gln).</text>
</comment>
<comment type="catalytic activity">
    <reaction evidence="1">
        <text>L-glutamyl-tRNA(Gln) + L-glutamine + ATP + H2O = L-glutaminyl-tRNA(Gln) + L-glutamate + ADP + phosphate + H(+)</text>
        <dbReference type="Rhea" id="RHEA:17521"/>
        <dbReference type="Rhea" id="RHEA-COMP:9681"/>
        <dbReference type="Rhea" id="RHEA-COMP:9684"/>
        <dbReference type="ChEBI" id="CHEBI:15377"/>
        <dbReference type="ChEBI" id="CHEBI:15378"/>
        <dbReference type="ChEBI" id="CHEBI:29985"/>
        <dbReference type="ChEBI" id="CHEBI:30616"/>
        <dbReference type="ChEBI" id="CHEBI:43474"/>
        <dbReference type="ChEBI" id="CHEBI:58359"/>
        <dbReference type="ChEBI" id="CHEBI:78520"/>
        <dbReference type="ChEBI" id="CHEBI:78521"/>
        <dbReference type="ChEBI" id="CHEBI:456216"/>
    </reaction>
</comment>
<comment type="catalytic activity">
    <reaction evidence="1">
        <text>L-aspartyl-tRNA(Asn) + L-glutamine + ATP + H2O = L-asparaginyl-tRNA(Asn) + L-glutamate + ADP + phosphate + 2 H(+)</text>
        <dbReference type="Rhea" id="RHEA:14513"/>
        <dbReference type="Rhea" id="RHEA-COMP:9674"/>
        <dbReference type="Rhea" id="RHEA-COMP:9677"/>
        <dbReference type="ChEBI" id="CHEBI:15377"/>
        <dbReference type="ChEBI" id="CHEBI:15378"/>
        <dbReference type="ChEBI" id="CHEBI:29985"/>
        <dbReference type="ChEBI" id="CHEBI:30616"/>
        <dbReference type="ChEBI" id="CHEBI:43474"/>
        <dbReference type="ChEBI" id="CHEBI:58359"/>
        <dbReference type="ChEBI" id="CHEBI:78515"/>
        <dbReference type="ChEBI" id="CHEBI:78516"/>
        <dbReference type="ChEBI" id="CHEBI:456216"/>
    </reaction>
</comment>
<comment type="subunit">
    <text evidence="1">Heterotrimer of A, B and C subunits.</text>
</comment>
<comment type="similarity">
    <text evidence="1">Belongs to the GatC family.</text>
</comment>
<keyword id="KW-0067">ATP-binding</keyword>
<keyword id="KW-0436">Ligase</keyword>
<keyword id="KW-0547">Nucleotide-binding</keyword>
<keyword id="KW-0648">Protein biosynthesis</keyword>
<keyword id="KW-1185">Reference proteome</keyword>
<name>GATC_NOSS1</name>
<proteinExistence type="inferred from homology"/>
<reference key="1">
    <citation type="journal article" date="2001" name="DNA Res.">
        <title>Complete genomic sequence of the filamentous nitrogen-fixing cyanobacterium Anabaena sp. strain PCC 7120.</title>
        <authorList>
            <person name="Kaneko T."/>
            <person name="Nakamura Y."/>
            <person name="Wolk C.P."/>
            <person name="Kuritz T."/>
            <person name="Sasamoto S."/>
            <person name="Watanabe A."/>
            <person name="Iriguchi M."/>
            <person name="Ishikawa A."/>
            <person name="Kawashima K."/>
            <person name="Kimura T."/>
            <person name="Kishida Y."/>
            <person name="Kohara M."/>
            <person name="Matsumoto M."/>
            <person name="Matsuno A."/>
            <person name="Muraki A."/>
            <person name="Nakazaki N."/>
            <person name="Shimpo S."/>
            <person name="Sugimoto M."/>
            <person name="Takazawa M."/>
            <person name="Yamada M."/>
            <person name="Yasuda M."/>
            <person name="Tabata S."/>
        </authorList>
    </citation>
    <scope>NUCLEOTIDE SEQUENCE [LARGE SCALE GENOMIC DNA]</scope>
    <source>
        <strain>PCC 7120 / SAG 25.82 / UTEX 2576</strain>
    </source>
</reference>